<gene>
    <name evidence="6" type="primary">Taf6l</name>
    <name type="synonym">Paf65a</name>
</gene>
<organism>
    <name type="scientific">Mus musculus</name>
    <name type="common">Mouse</name>
    <dbReference type="NCBI Taxonomy" id="10090"/>
    <lineage>
        <taxon>Eukaryota</taxon>
        <taxon>Metazoa</taxon>
        <taxon>Chordata</taxon>
        <taxon>Craniata</taxon>
        <taxon>Vertebrata</taxon>
        <taxon>Euteleostomi</taxon>
        <taxon>Mammalia</taxon>
        <taxon>Eutheria</taxon>
        <taxon>Euarchontoglires</taxon>
        <taxon>Glires</taxon>
        <taxon>Rodentia</taxon>
        <taxon>Myomorpha</taxon>
        <taxon>Muroidea</taxon>
        <taxon>Muridae</taxon>
        <taxon>Murinae</taxon>
        <taxon>Mus</taxon>
        <taxon>Mus</taxon>
    </lineage>
</organism>
<comment type="function">
    <text evidence="1 3">Functions as a component of the PCAF complex. The PCAF complex is capable of efficiently acetylating histones in a nucleosomal context. The PCAF complex could be considered as the human version of the yeast SAGA complex (By similarity). With TAF5L, acts as an epigenetic regulator essential for somatic reprogramming. Regulates target genes through H3K9ac deposition and MYC recruitment which trigger MYC regulatory network to orchestrate gene expression programs to control embryonic stem cell state (PubMed:31005419). Functions with MYC to activate target gene expression through RNA polymerase II pause release (PubMed:31005419).</text>
</comment>
<comment type="subunit">
    <text evidence="1">The PCAF complex is composed of a number of TBP-associated factors (TAFS), such as TAF5, TAF5L, TAF6, TAF6L, TAF9, TAF10 and TAF12, PCAF, and also PCAF-associated factors (PAFs), such as TADA2L/ADA2, TADA3L/ADA3 and SPT3 (By similarity). Component of the STAGA transcription coactivator-HAT complex, at least composed of SUPT3H, GCN5L2, TAF5L, TAF6L, SUPT7L, TADA3L, TAD1L, TAF10, TAF12, TRRAP and TAF9.</text>
</comment>
<comment type="subcellular location">
    <subcellularLocation>
        <location evidence="3">Nucleus</location>
    </subcellularLocation>
</comment>
<comment type="alternative products">
    <event type="alternative splicing"/>
    <isoform>
        <id>Q8R2K4-1</id>
        <name>1</name>
        <sequence type="displayed"/>
    </isoform>
    <isoform>
        <id>Q8R2K4-2</id>
        <name>2</name>
        <sequence type="described" ref="VSP_010158"/>
    </isoform>
</comment>
<comment type="similarity">
    <text evidence="5">Belongs to the TAF6 family.</text>
</comment>
<keyword id="KW-0025">Alternative splicing</keyword>
<keyword id="KW-0488">Methylation</keyword>
<keyword id="KW-0539">Nucleus</keyword>
<keyword id="KW-0597">Phosphoprotein</keyword>
<keyword id="KW-1185">Reference proteome</keyword>
<keyword id="KW-0804">Transcription</keyword>
<keyword id="KW-0805">Transcription regulation</keyword>
<protein>
    <recommendedName>
        <fullName evidence="5">TAF6-like RNA polymerase II p300/CBP-associated factor-associated factor 65 kDa subunit 6L</fullName>
        <shortName evidence="5">TAF6L</shortName>
    </recommendedName>
    <alternativeName>
        <fullName>PCAF-associated factor 65-alpha</fullName>
        <shortName>PAF65-alpha</shortName>
    </alternativeName>
</protein>
<sequence>MSEREERRFVEIPRESVRLMAESTGLELSDEVAALLAEDVCYRLREATQNSSQFMKHTKRRKLTVEDFNRALRWSSVEAVCGYGSQEALPLRPAREGDLYFPEDREVSLVELALATNIPKGCAETAVRVHVSYLDGKGNLAPQGSVPSAVSSLTDDLLKYYQQVTRAVLGDDPQLMKVALQDLQTNSKIAALLPYFVYVVSGVKSVSHDLEQLHRLLQVARSLIRNPHLCLGPYVRSLVGSVLYCVLEPLAASINPLNDHWTLRDGAALLLSHIFWTHGDLVSGLYQQILLSLQKVLTDPVRPLCSHYGAVVGLHALGWKAVERVLYPHLPTYWTNLQAVLDDYSVSNAQVKADGHKVYGAILVAVERLLKMKAQAAEPNRGGLGGRGYRPAEDLPWDSLLLQESPPGGSSETGFGSGLPPPSGVAGPEDPSSLTLADIYRELYSFFGDSLATRFGTGQPAPTAPRPPGDKKEPAAAPDSVRKMPQLTASAVVSPQGDESPCGGTLATATAASESRPLPRVHRARGAPRQQGPGAGTRDVFQKSRFAPRGAPHFRFIIAGRQAGRRCRGRLFQTAFPAPYGPSPASRYVQKLPMIGRTGRPARRWALSDYSLYLPL</sequence>
<name>TAF6L_MOUSE</name>
<dbReference type="EMBL" id="AK077149">
    <property type="protein sequence ID" value="BAC36645.1"/>
    <property type="molecule type" value="mRNA"/>
</dbReference>
<dbReference type="EMBL" id="BC028647">
    <property type="protein sequence ID" value="AAH28647.1"/>
    <property type="molecule type" value="mRNA"/>
</dbReference>
<dbReference type="RefSeq" id="NP_001171269.1">
    <property type="nucleotide sequence ID" value="NM_001177798.1"/>
</dbReference>
<dbReference type="RefSeq" id="NP_666204.2">
    <property type="nucleotide sequence ID" value="NM_146092.2"/>
</dbReference>
<dbReference type="SMR" id="Q8R2K4"/>
<dbReference type="BioGRID" id="230442">
    <property type="interactions" value="7"/>
</dbReference>
<dbReference type="ComplexPortal" id="CPX-1024">
    <property type="entry name" value="PCAF histone acetylase complex"/>
</dbReference>
<dbReference type="ComplexPortal" id="CPX-6803">
    <property type="entry name" value="SAGA complex, KAT2B variant"/>
</dbReference>
<dbReference type="ComplexPortal" id="CPX-920">
    <property type="entry name" value="SAGA complex, KAT2A variant"/>
</dbReference>
<dbReference type="FunCoup" id="Q8R2K4">
    <property type="interactions" value="2901"/>
</dbReference>
<dbReference type="IntAct" id="Q8R2K4">
    <property type="interactions" value="2"/>
</dbReference>
<dbReference type="MINT" id="Q8R2K4"/>
<dbReference type="STRING" id="10090.ENSMUSP00000135220"/>
<dbReference type="GlyGen" id="Q8R2K4">
    <property type="glycosylation" value="1 site"/>
</dbReference>
<dbReference type="iPTMnet" id="Q8R2K4"/>
<dbReference type="PhosphoSitePlus" id="Q8R2K4"/>
<dbReference type="PaxDb" id="10090-ENSMUSP00000135193"/>
<dbReference type="ProteomicsDB" id="254813">
    <molecule id="Q8R2K4-1"/>
</dbReference>
<dbReference type="ProteomicsDB" id="254814">
    <molecule id="Q8R2K4-2"/>
</dbReference>
<dbReference type="Pumba" id="Q8R2K4"/>
<dbReference type="Antibodypedia" id="14977">
    <property type="antibodies" value="231 antibodies from 27 providers"/>
</dbReference>
<dbReference type="DNASU" id="225895"/>
<dbReference type="Ensembl" id="ENSMUST00000177056.8">
    <molecule id="Q8R2K4-1"/>
    <property type="protein sequence ID" value="ENSMUSP00000135028.2"/>
    <property type="gene ID" value="ENSMUSG00000003680.17"/>
</dbReference>
<dbReference type="GeneID" id="225895"/>
<dbReference type="KEGG" id="mmu:225895"/>
<dbReference type="AGR" id="MGI:2444957"/>
<dbReference type="CTD" id="10629"/>
<dbReference type="MGI" id="MGI:2444957">
    <property type="gene designation" value="Taf6l"/>
</dbReference>
<dbReference type="VEuPathDB" id="HostDB:ENSMUSG00000003680"/>
<dbReference type="eggNOG" id="KOG2549">
    <property type="taxonomic scope" value="Eukaryota"/>
</dbReference>
<dbReference type="GeneTree" id="ENSGT00640000091486"/>
<dbReference type="HOGENOM" id="CLU_022764_0_0_1"/>
<dbReference type="InParanoid" id="Q8R2K4"/>
<dbReference type="OrthoDB" id="6621890at2759"/>
<dbReference type="PhylomeDB" id="Q8R2K4"/>
<dbReference type="BioGRID-ORCS" id="225895">
    <property type="hits" value="23 hits in 82 CRISPR screens"/>
</dbReference>
<dbReference type="ChiTaRS" id="Taf6l">
    <property type="organism name" value="mouse"/>
</dbReference>
<dbReference type="PRO" id="PR:Q8R2K4"/>
<dbReference type="Proteomes" id="UP000000589">
    <property type="component" value="Chromosome 19"/>
</dbReference>
<dbReference type="RNAct" id="Q8R2K4">
    <property type="molecule type" value="protein"/>
</dbReference>
<dbReference type="Bgee" id="ENSMUSG00000003680">
    <property type="expression patterns" value="Expressed in saccule of membranous labyrinth and 209 other cell types or tissues"/>
</dbReference>
<dbReference type="ExpressionAtlas" id="Q8R2K4">
    <property type="expression patterns" value="baseline and differential"/>
</dbReference>
<dbReference type="GO" id="GO:0005634">
    <property type="term" value="C:nucleus"/>
    <property type="evidence" value="ECO:0000314"/>
    <property type="project" value="UniProtKB"/>
</dbReference>
<dbReference type="GO" id="GO:0000124">
    <property type="term" value="C:SAGA complex"/>
    <property type="evidence" value="ECO:0000303"/>
    <property type="project" value="ComplexPortal"/>
</dbReference>
<dbReference type="GO" id="GO:0046695">
    <property type="term" value="C:SLIK (SAGA-like) complex"/>
    <property type="evidence" value="ECO:0007669"/>
    <property type="project" value="InterPro"/>
</dbReference>
<dbReference type="GO" id="GO:0005669">
    <property type="term" value="C:transcription factor TFIID complex"/>
    <property type="evidence" value="ECO:0007669"/>
    <property type="project" value="InterPro"/>
</dbReference>
<dbReference type="GO" id="GO:0046982">
    <property type="term" value="F:protein heterodimerization activity"/>
    <property type="evidence" value="ECO:0007669"/>
    <property type="project" value="InterPro"/>
</dbReference>
<dbReference type="GO" id="GO:0016251">
    <property type="term" value="F:RNA polymerase II general transcription initiation factor activity"/>
    <property type="evidence" value="ECO:0007669"/>
    <property type="project" value="InterPro"/>
</dbReference>
<dbReference type="GO" id="GO:0045893">
    <property type="term" value="P:positive regulation of DNA-templated transcription"/>
    <property type="evidence" value="ECO:0000303"/>
    <property type="project" value="ComplexPortal"/>
</dbReference>
<dbReference type="GO" id="GO:0006282">
    <property type="term" value="P:regulation of DNA repair"/>
    <property type="evidence" value="ECO:0000303"/>
    <property type="project" value="ComplexPortal"/>
</dbReference>
<dbReference type="GO" id="GO:0006355">
    <property type="term" value="P:regulation of DNA-templated transcription"/>
    <property type="evidence" value="ECO:0000314"/>
    <property type="project" value="UniProtKB"/>
</dbReference>
<dbReference type="GO" id="GO:0043484">
    <property type="term" value="P:regulation of RNA splicing"/>
    <property type="evidence" value="ECO:0000303"/>
    <property type="project" value="ComplexPortal"/>
</dbReference>
<dbReference type="GO" id="GO:1904672">
    <property type="term" value="P:regulation of somatic stem cell population maintenance"/>
    <property type="evidence" value="ECO:0000314"/>
    <property type="project" value="UniProtKB"/>
</dbReference>
<dbReference type="GO" id="GO:0006367">
    <property type="term" value="P:transcription initiation at RNA polymerase II promoter"/>
    <property type="evidence" value="ECO:0007669"/>
    <property type="project" value="InterPro"/>
</dbReference>
<dbReference type="CDD" id="cd22932">
    <property type="entry name" value="HFD_TAF6L"/>
    <property type="match status" value="1"/>
</dbReference>
<dbReference type="CDD" id="cd08050">
    <property type="entry name" value="TAF6C"/>
    <property type="match status" value="1"/>
</dbReference>
<dbReference type="FunFam" id="1.10.20.10:FF:000040">
    <property type="entry name" value="TAF6-like RNA polymerase II p300/CBP-associated factor-associated factor 65 kDa subunit 6L"/>
    <property type="match status" value="1"/>
</dbReference>
<dbReference type="FunFam" id="1.25.40.770:FF:000002">
    <property type="entry name" value="TAF6-like RNA polymerase II p300/CBP-associated factor-associated factor 65 kDa subunit 6L"/>
    <property type="match status" value="1"/>
</dbReference>
<dbReference type="Gene3D" id="1.10.20.10">
    <property type="entry name" value="Histone, subunit A"/>
    <property type="match status" value="1"/>
</dbReference>
<dbReference type="Gene3D" id="1.25.40.770">
    <property type="entry name" value="TAF6, C-terminal HEAT repeat domain"/>
    <property type="match status" value="1"/>
</dbReference>
<dbReference type="InterPro" id="IPR016024">
    <property type="entry name" value="ARM-type_fold"/>
</dbReference>
<dbReference type="InterPro" id="IPR009072">
    <property type="entry name" value="Histone-fold"/>
</dbReference>
<dbReference type="InterPro" id="IPR037796">
    <property type="entry name" value="TAF6"/>
</dbReference>
<dbReference type="InterPro" id="IPR011442">
    <property type="entry name" value="TAF6_C"/>
</dbReference>
<dbReference type="InterPro" id="IPR046344">
    <property type="entry name" value="TAF6_C_sf"/>
</dbReference>
<dbReference type="InterPro" id="IPR004823">
    <property type="entry name" value="TAF_TATA-bd_Histone-like_dom"/>
</dbReference>
<dbReference type="PANTHER" id="PTHR10221:SF22">
    <property type="entry name" value="TAF6-LIKE RNA POLYMERASE II P300_CBP-ASSOCIATED FACTOR-ASSOCIATED FACTOR 65 KDA SUBUNIT 6L"/>
    <property type="match status" value="1"/>
</dbReference>
<dbReference type="PANTHER" id="PTHR10221">
    <property type="entry name" value="TRANSCRIPTION INITIATION FACTOR TFIID SUBUNIT 6"/>
    <property type="match status" value="1"/>
</dbReference>
<dbReference type="Pfam" id="PF02969">
    <property type="entry name" value="TAF"/>
    <property type="match status" value="1"/>
</dbReference>
<dbReference type="Pfam" id="PF07571">
    <property type="entry name" value="TAF6_C"/>
    <property type="match status" value="1"/>
</dbReference>
<dbReference type="SMART" id="SM00803">
    <property type="entry name" value="TAF"/>
    <property type="match status" value="1"/>
</dbReference>
<dbReference type="SUPFAM" id="SSF48371">
    <property type="entry name" value="ARM repeat"/>
    <property type="match status" value="1"/>
</dbReference>
<dbReference type="SUPFAM" id="SSF47113">
    <property type="entry name" value="Histone-fold"/>
    <property type="match status" value="1"/>
</dbReference>
<proteinExistence type="evidence at protein level"/>
<accession>Q8R2K4</accession>
<accession>Q8C5T2</accession>
<evidence type="ECO:0000250" key="1">
    <source>
        <dbReference type="UniProtKB" id="Q9Y6J9"/>
    </source>
</evidence>
<evidence type="ECO:0000256" key="2">
    <source>
        <dbReference type="SAM" id="MobiDB-lite"/>
    </source>
</evidence>
<evidence type="ECO:0000269" key="3">
    <source>
    </source>
</evidence>
<evidence type="ECO:0000303" key="4">
    <source>
    </source>
</evidence>
<evidence type="ECO:0000305" key="5"/>
<evidence type="ECO:0000312" key="6">
    <source>
        <dbReference type="MGI" id="MGI:2444957"/>
    </source>
</evidence>
<evidence type="ECO:0007744" key="7">
    <source>
    </source>
</evidence>
<reference key="1">
    <citation type="journal article" date="2005" name="Science">
        <title>The transcriptional landscape of the mammalian genome.</title>
        <authorList>
            <person name="Carninci P."/>
            <person name="Kasukawa T."/>
            <person name="Katayama S."/>
            <person name="Gough J."/>
            <person name="Frith M.C."/>
            <person name="Maeda N."/>
            <person name="Oyama R."/>
            <person name="Ravasi T."/>
            <person name="Lenhard B."/>
            <person name="Wells C."/>
            <person name="Kodzius R."/>
            <person name="Shimokawa K."/>
            <person name="Bajic V.B."/>
            <person name="Brenner S.E."/>
            <person name="Batalov S."/>
            <person name="Forrest A.R."/>
            <person name="Zavolan M."/>
            <person name="Davis M.J."/>
            <person name="Wilming L.G."/>
            <person name="Aidinis V."/>
            <person name="Allen J.E."/>
            <person name="Ambesi-Impiombato A."/>
            <person name="Apweiler R."/>
            <person name="Aturaliya R.N."/>
            <person name="Bailey T.L."/>
            <person name="Bansal M."/>
            <person name="Baxter L."/>
            <person name="Beisel K.W."/>
            <person name="Bersano T."/>
            <person name="Bono H."/>
            <person name="Chalk A.M."/>
            <person name="Chiu K.P."/>
            <person name="Choudhary V."/>
            <person name="Christoffels A."/>
            <person name="Clutterbuck D.R."/>
            <person name="Crowe M.L."/>
            <person name="Dalla E."/>
            <person name="Dalrymple B.P."/>
            <person name="de Bono B."/>
            <person name="Della Gatta G."/>
            <person name="di Bernardo D."/>
            <person name="Down T."/>
            <person name="Engstrom P."/>
            <person name="Fagiolini M."/>
            <person name="Faulkner G."/>
            <person name="Fletcher C.F."/>
            <person name="Fukushima T."/>
            <person name="Furuno M."/>
            <person name="Futaki S."/>
            <person name="Gariboldi M."/>
            <person name="Georgii-Hemming P."/>
            <person name="Gingeras T.R."/>
            <person name="Gojobori T."/>
            <person name="Green R.E."/>
            <person name="Gustincich S."/>
            <person name="Harbers M."/>
            <person name="Hayashi Y."/>
            <person name="Hensch T.K."/>
            <person name="Hirokawa N."/>
            <person name="Hill D."/>
            <person name="Huminiecki L."/>
            <person name="Iacono M."/>
            <person name="Ikeo K."/>
            <person name="Iwama A."/>
            <person name="Ishikawa T."/>
            <person name="Jakt M."/>
            <person name="Kanapin A."/>
            <person name="Katoh M."/>
            <person name="Kawasawa Y."/>
            <person name="Kelso J."/>
            <person name="Kitamura H."/>
            <person name="Kitano H."/>
            <person name="Kollias G."/>
            <person name="Krishnan S.P."/>
            <person name="Kruger A."/>
            <person name="Kummerfeld S.K."/>
            <person name="Kurochkin I.V."/>
            <person name="Lareau L.F."/>
            <person name="Lazarevic D."/>
            <person name="Lipovich L."/>
            <person name="Liu J."/>
            <person name="Liuni S."/>
            <person name="McWilliam S."/>
            <person name="Madan Babu M."/>
            <person name="Madera M."/>
            <person name="Marchionni L."/>
            <person name="Matsuda H."/>
            <person name="Matsuzawa S."/>
            <person name="Miki H."/>
            <person name="Mignone F."/>
            <person name="Miyake S."/>
            <person name="Morris K."/>
            <person name="Mottagui-Tabar S."/>
            <person name="Mulder N."/>
            <person name="Nakano N."/>
            <person name="Nakauchi H."/>
            <person name="Ng P."/>
            <person name="Nilsson R."/>
            <person name="Nishiguchi S."/>
            <person name="Nishikawa S."/>
            <person name="Nori F."/>
            <person name="Ohara O."/>
            <person name="Okazaki Y."/>
            <person name="Orlando V."/>
            <person name="Pang K.C."/>
            <person name="Pavan W.J."/>
            <person name="Pavesi G."/>
            <person name="Pesole G."/>
            <person name="Petrovsky N."/>
            <person name="Piazza S."/>
            <person name="Reed J."/>
            <person name="Reid J.F."/>
            <person name="Ring B.Z."/>
            <person name="Ringwald M."/>
            <person name="Rost B."/>
            <person name="Ruan Y."/>
            <person name="Salzberg S.L."/>
            <person name="Sandelin A."/>
            <person name="Schneider C."/>
            <person name="Schoenbach C."/>
            <person name="Sekiguchi K."/>
            <person name="Semple C.A."/>
            <person name="Seno S."/>
            <person name="Sessa L."/>
            <person name="Sheng Y."/>
            <person name="Shibata Y."/>
            <person name="Shimada H."/>
            <person name="Shimada K."/>
            <person name="Silva D."/>
            <person name="Sinclair B."/>
            <person name="Sperling S."/>
            <person name="Stupka E."/>
            <person name="Sugiura K."/>
            <person name="Sultana R."/>
            <person name="Takenaka Y."/>
            <person name="Taki K."/>
            <person name="Tammoja K."/>
            <person name="Tan S.L."/>
            <person name="Tang S."/>
            <person name="Taylor M.S."/>
            <person name="Tegner J."/>
            <person name="Teichmann S.A."/>
            <person name="Ueda H.R."/>
            <person name="van Nimwegen E."/>
            <person name="Verardo R."/>
            <person name="Wei C.L."/>
            <person name="Yagi K."/>
            <person name="Yamanishi H."/>
            <person name="Zabarovsky E."/>
            <person name="Zhu S."/>
            <person name="Zimmer A."/>
            <person name="Hide W."/>
            <person name="Bult C."/>
            <person name="Grimmond S.M."/>
            <person name="Teasdale R.D."/>
            <person name="Liu E.T."/>
            <person name="Brusic V."/>
            <person name="Quackenbush J."/>
            <person name="Wahlestedt C."/>
            <person name="Mattick J.S."/>
            <person name="Hume D.A."/>
            <person name="Kai C."/>
            <person name="Sasaki D."/>
            <person name="Tomaru Y."/>
            <person name="Fukuda S."/>
            <person name="Kanamori-Katayama M."/>
            <person name="Suzuki M."/>
            <person name="Aoki J."/>
            <person name="Arakawa T."/>
            <person name="Iida J."/>
            <person name="Imamura K."/>
            <person name="Itoh M."/>
            <person name="Kato T."/>
            <person name="Kawaji H."/>
            <person name="Kawagashira N."/>
            <person name="Kawashima T."/>
            <person name="Kojima M."/>
            <person name="Kondo S."/>
            <person name="Konno H."/>
            <person name="Nakano K."/>
            <person name="Ninomiya N."/>
            <person name="Nishio T."/>
            <person name="Okada M."/>
            <person name="Plessy C."/>
            <person name="Shibata K."/>
            <person name="Shiraki T."/>
            <person name="Suzuki S."/>
            <person name="Tagami M."/>
            <person name="Waki K."/>
            <person name="Watahiki A."/>
            <person name="Okamura-Oho Y."/>
            <person name="Suzuki H."/>
            <person name="Kawai J."/>
            <person name="Hayashizaki Y."/>
        </authorList>
    </citation>
    <scope>NUCLEOTIDE SEQUENCE [LARGE SCALE MRNA] (ISOFORM 2)</scope>
    <source>
        <strain>C57BL/6J</strain>
        <tissue>Testis</tissue>
    </source>
</reference>
<reference key="2">
    <citation type="journal article" date="2004" name="Genome Res.">
        <title>The status, quality, and expansion of the NIH full-length cDNA project: the Mammalian Gene Collection (MGC).</title>
        <authorList>
            <consortium name="The MGC Project Team"/>
        </authorList>
    </citation>
    <scope>NUCLEOTIDE SEQUENCE [LARGE SCALE MRNA] (ISOFORM 1)</scope>
    <source>
        <tissue>Mammary gland</tissue>
    </source>
</reference>
<reference key="3">
    <citation type="journal article" date="2014" name="Mol. Cell. Proteomics">
        <title>Immunoaffinity enrichment and mass spectrometry analysis of protein methylation.</title>
        <authorList>
            <person name="Guo A."/>
            <person name="Gu H."/>
            <person name="Zhou J."/>
            <person name="Mulhern D."/>
            <person name="Wang Y."/>
            <person name="Lee K.A."/>
            <person name="Yang V."/>
            <person name="Aguiar M."/>
            <person name="Kornhauser J."/>
            <person name="Jia X."/>
            <person name="Ren J."/>
            <person name="Beausoleil S.A."/>
            <person name="Silva J.C."/>
            <person name="Vemulapalli V."/>
            <person name="Bedford M.T."/>
            <person name="Comb M.J."/>
        </authorList>
    </citation>
    <scope>METHYLATION [LARGE SCALE ANALYSIS] AT ARG-549 AND ARG-555</scope>
    <scope>IDENTIFICATION BY MASS SPECTROMETRY [LARGE SCALE ANALYSIS]</scope>
    <source>
        <tissue>Embryo</tissue>
    </source>
</reference>
<reference key="4">
    <citation type="journal article" date="2019" name="Mol. Cell">
        <title>TAF5L and TAF6L Maintain Self-Renewal of Embryonic Stem Cells via the MYC Regulatory Network.</title>
        <authorList>
            <person name="Seruggia D."/>
            <person name="Oti M."/>
            <person name="Tripathi P."/>
            <person name="Canver M.C."/>
            <person name="LeBlanc L."/>
            <person name="Di Giammartino D.C."/>
            <person name="Bullen M.J."/>
            <person name="Nefzger C.M."/>
            <person name="Sun Y.B.Y."/>
            <person name="Farouni R."/>
            <person name="Polo J.M."/>
            <person name="Pinello L."/>
            <person name="Apostolou E."/>
            <person name="Kim J."/>
            <person name="Orkin S.H."/>
            <person name="Das P.P."/>
        </authorList>
    </citation>
    <scope>FUNCTION</scope>
    <scope>SUBCELLULAR LOCATION</scope>
</reference>
<feature type="chain" id="PRO_0000118880" description="TAF6-like RNA polymerase II p300/CBP-associated factor-associated factor 65 kDa subunit 6L">
    <location>
        <begin position="1"/>
        <end position="616"/>
    </location>
</feature>
<feature type="region of interest" description="Disordered" evidence="2">
    <location>
        <begin position="399"/>
        <end position="432"/>
    </location>
</feature>
<feature type="region of interest" description="Disordered" evidence="2">
    <location>
        <begin position="455"/>
        <end position="539"/>
    </location>
</feature>
<feature type="modified residue" description="Phosphoserine" evidence="1">
    <location>
        <position position="494"/>
    </location>
</feature>
<feature type="modified residue" description="Phosphoserine" evidence="1">
    <location>
        <position position="500"/>
    </location>
</feature>
<feature type="modified residue" description="Asymmetric dimethylarginine" evidence="7">
    <location>
        <position position="549"/>
    </location>
</feature>
<feature type="modified residue" description="Asymmetric dimethylarginine" evidence="7">
    <location>
        <position position="555"/>
    </location>
</feature>
<feature type="modified residue" description="Asymmetric dimethylarginine" evidence="1">
    <location>
        <position position="587"/>
    </location>
</feature>
<feature type="splice variant" id="VSP_010158" description="In isoform 2." evidence="4">
    <location>
        <begin position="179"/>
        <end position="203"/>
    </location>
</feature>